<organism>
    <name type="scientific">Acidovorax ebreus (strain TPSY)</name>
    <name type="common">Diaphorobacter sp. (strain TPSY)</name>
    <dbReference type="NCBI Taxonomy" id="535289"/>
    <lineage>
        <taxon>Bacteria</taxon>
        <taxon>Pseudomonadati</taxon>
        <taxon>Pseudomonadota</taxon>
        <taxon>Betaproteobacteria</taxon>
        <taxon>Burkholderiales</taxon>
        <taxon>Comamonadaceae</taxon>
        <taxon>Diaphorobacter</taxon>
    </lineage>
</organism>
<accession>B9MIF6</accession>
<name>RSMA_ACIET</name>
<feature type="chain" id="PRO_1000194380" description="Ribosomal RNA small subunit methyltransferase A">
    <location>
        <begin position="1"/>
        <end position="253"/>
    </location>
</feature>
<feature type="binding site" evidence="1">
    <location>
        <position position="12"/>
    </location>
    <ligand>
        <name>S-adenosyl-L-methionine</name>
        <dbReference type="ChEBI" id="CHEBI:59789"/>
    </ligand>
</feature>
<feature type="binding site" evidence="1">
    <location>
        <position position="14"/>
    </location>
    <ligand>
        <name>S-adenosyl-L-methionine</name>
        <dbReference type="ChEBI" id="CHEBI:59789"/>
    </ligand>
</feature>
<feature type="binding site" evidence="1">
    <location>
        <position position="39"/>
    </location>
    <ligand>
        <name>S-adenosyl-L-methionine</name>
        <dbReference type="ChEBI" id="CHEBI:59789"/>
    </ligand>
</feature>
<feature type="binding site" evidence="1">
    <location>
        <position position="60"/>
    </location>
    <ligand>
        <name>S-adenosyl-L-methionine</name>
        <dbReference type="ChEBI" id="CHEBI:59789"/>
    </ligand>
</feature>
<feature type="binding site" evidence="1">
    <location>
        <position position="81"/>
    </location>
    <ligand>
        <name>S-adenosyl-L-methionine</name>
        <dbReference type="ChEBI" id="CHEBI:59789"/>
    </ligand>
</feature>
<feature type="binding site" evidence="1">
    <location>
        <position position="104"/>
    </location>
    <ligand>
        <name>S-adenosyl-L-methionine</name>
        <dbReference type="ChEBI" id="CHEBI:59789"/>
    </ligand>
</feature>
<dbReference type="EC" id="2.1.1.182" evidence="1"/>
<dbReference type="EMBL" id="CP001392">
    <property type="protein sequence ID" value="ACM34894.1"/>
    <property type="molecule type" value="Genomic_DNA"/>
</dbReference>
<dbReference type="RefSeq" id="WP_015914675.1">
    <property type="nucleotide sequence ID" value="NC_011992.1"/>
</dbReference>
<dbReference type="SMR" id="B9MIF6"/>
<dbReference type="KEGG" id="dia:Dtpsy_3468"/>
<dbReference type="eggNOG" id="COG0030">
    <property type="taxonomic scope" value="Bacteria"/>
</dbReference>
<dbReference type="HOGENOM" id="CLU_041220_0_1_4"/>
<dbReference type="Proteomes" id="UP000000450">
    <property type="component" value="Chromosome"/>
</dbReference>
<dbReference type="GO" id="GO:0005829">
    <property type="term" value="C:cytosol"/>
    <property type="evidence" value="ECO:0007669"/>
    <property type="project" value="TreeGrafter"/>
</dbReference>
<dbReference type="GO" id="GO:0052908">
    <property type="term" value="F:16S rRNA (adenine(1518)-N(6)/adenine(1519)-N(6))-dimethyltransferase activity"/>
    <property type="evidence" value="ECO:0007669"/>
    <property type="project" value="UniProtKB-EC"/>
</dbReference>
<dbReference type="GO" id="GO:0003723">
    <property type="term" value="F:RNA binding"/>
    <property type="evidence" value="ECO:0007669"/>
    <property type="project" value="UniProtKB-KW"/>
</dbReference>
<dbReference type="Gene3D" id="1.10.8.100">
    <property type="entry name" value="Ribosomal RNA adenine dimethylase-like, domain 2"/>
    <property type="match status" value="1"/>
</dbReference>
<dbReference type="Gene3D" id="3.40.50.150">
    <property type="entry name" value="Vaccinia Virus protein VP39"/>
    <property type="match status" value="1"/>
</dbReference>
<dbReference type="HAMAP" id="MF_00607">
    <property type="entry name" value="16SrRNA_methyltr_A"/>
    <property type="match status" value="1"/>
</dbReference>
<dbReference type="InterPro" id="IPR001737">
    <property type="entry name" value="KsgA/Erm"/>
</dbReference>
<dbReference type="InterPro" id="IPR023165">
    <property type="entry name" value="rRNA_Ade_diMease-like_C"/>
</dbReference>
<dbReference type="InterPro" id="IPR020596">
    <property type="entry name" value="rRNA_Ade_Mease_Trfase_CS"/>
</dbReference>
<dbReference type="InterPro" id="IPR020598">
    <property type="entry name" value="rRNA_Ade_methylase_Trfase_N"/>
</dbReference>
<dbReference type="InterPro" id="IPR011530">
    <property type="entry name" value="rRNA_adenine_dimethylase"/>
</dbReference>
<dbReference type="InterPro" id="IPR029063">
    <property type="entry name" value="SAM-dependent_MTases_sf"/>
</dbReference>
<dbReference type="NCBIfam" id="TIGR00755">
    <property type="entry name" value="ksgA"/>
    <property type="match status" value="1"/>
</dbReference>
<dbReference type="PANTHER" id="PTHR11727">
    <property type="entry name" value="DIMETHYLADENOSINE TRANSFERASE"/>
    <property type="match status" value="1"/>
</dbReference>
<dbReference type="PANTHER" id="PTHR11727:SF7">
    <property type="entry name" value="DIMETHYLADENOSINE TRANSFERASE-RELATED"/>
    <property type="match status" value="1"/>
</dbReference>
<dbReference type="Pfam" id="PF00398">
    <property type="entry name" value="RrnaAD"/>
    <property type="match status" value="1"/>
</dbReference>
<dbReference type="SMART" id="SM00650">
    <property type="entry name" value="rADc"/>
    <property type="match status" value="1"/>
</dbReference>
<dbReference type="SUPFAM" id="SSF53335">
    <property type="entry name" value="S-adenosyl-L-methionine-dependent methyltransferases"/>
    <property type="match status" value="1"/>
</dbReference>
<dbReference type="PROSITE" id="PS01131">
    <property type="entry name" value="RRNA_A_DIMETH"/>
    <property type="match status" value="1"/>
</dbReference>
<dbReference type="PROSITE" id="PS51689">
    <property type="entry name" value="SAM_RNA_A_N6_MT"/>
    <property type="match status" value="1"/>
</dbReference>
<evidence type="ECO:0000255" key="1">
    <source>
        <dbReference type="HAMAP-Rule" id="MF_00607"/>
    </source>
</evidence>
<gene>
    <name evidence="1" type="primary">rsmA</name>
    <name evidence="1" type="synonym">ksgA</name>
    <name type="ordered locus">Dtpsy_3468</name>
</gene>
<reference key="1">
    <citation type="submission" date="2009-01" db="EMBL/GenBank/DDBJ databases">
        <title>Complete sequence of Diaphorobacter sp. TPSY.</title>
        <authorList>
            <consortium name="US DOE Joint Genome Institute"/>
            <person name="Lucas S."/>
            <person name="Copeland A."/>
            <person name="Lapidus A."/>
            <person name="Glavina del Rio T."/>
            <person name="Tice H."/>
            <person name="Bruce D."/>
            <person name="Goodwin L."/>
            <person name="Pitluck S."/>
            <person name="Chertkov O."/>
            <person name="Brettin T."/>
            <person name="Detter J.C."/>
            <person name="Han C."/>
            <person name="Larimer F."/>
            <person name="Land M."/>
            <person name="Hauser L."/>
            <person name="Kyrpides N."/>
            <person name="Mikhailova N."/>
            <person name="Coates J.D."/>
        </authorList>
    </citation>
    <scope>NUCLEOTIDE SEQUENCE [LARGE SCALE GENOMIC DNA]</scope>
    <source>
        <strain>TPSY</strain>
    </source>
</reference>
<protein>
    <recommendedName>
        <fullName evidence="1">Ribosomal RNA small subunit methyltransferase A</fullName>
        <ecNumber evidence="1">2.1.1.182</ecNumber>
    </recommendedName>
    <alternativeName>
        <fullName evidence="1">16S rRNA (adenine(1518)-N(6)/adenine(1519)-N(6))-dimethyltransferase</fullName>
    </alternativeName>
    <alternativeName>
        <fullName evidence="1">16S rRNA dimethyladenosine transferase</fullName>
    </alternativeName>
    <alternativeName>
        <fullName evidence="1">16S rRNA dimethylase</fullName>
    </alternativeName>
    <alternativeName>
        <fullName evidence="1">S-adenosylmethionine-6-N', N'-adenosyl(rRNA) dimethyltransferase</fullName>
    </alternativeName>
</protein>
<proteinExistence type="inferred from homology"/>
<comment type="function">
    <text evidence="1">Specifically dimethylates two adjacent adenosines (A1518 and A1519) in the loop of a conserved hairpin near the 3'-end of 16S rRNA in the 30S particle. May play a critical role in biogenesis of 30S subunits.</text>
</comment>
<comment type="catalytic activity">
    <reaction evidence="1">
        <text>adenosine(1518)/adenosine(1519) in 16S rRNA + 4 S-adenosyl-L-methionine = N(6)-dimethyladenosine(1518)/N(6)-dimethyladenosine(1519) in 16S rRNA + 4 S-adenosyl-L-homocysteine + 4 H(+)</text>
        <dbReference type="Rhea" id="RHEA:19609"/>
        <dbReference type="Rhea" id="RHEA-COMP:10232"/>
        <dbReference type="Rhea" id="RHEA-COMP:10233"/>
        <dbReference type="ChEBI" id="CHEBI:15378"/>
        <dbReference type="ChEBI" id="CHEBI:57856"/>
        <dbReference type="ChEBI" id="CHEBI:59789"/>
        <dbReference type="ChEBI" id="CHEBI:74411"/>
        <dbReference type="ChEBI" id="CHEBI:74493"/>
        <dbReference type="EC" id="2.1.1.182"/>
    </reaction>
</comment>
<comment type="subcellular location">
    <subcellularLocation>
        <location evidence="1">Cytoplasm</location>
    </subcellularLocation>
</comment>
<comment type="similarity">
    <text evidence="1">Belongs to the class I-like SAM-binding methyltransferase superfamily. rRNA adenine N(6)-methyltransferase family. RsmA subfamily.</text>
</comment>
<keyword id="KW-0963">Cytoplasm</keyword>
<keyword id="KW-0489">Methyltransferase</keyword>
<keyword id="KW-1185">Reference proteome</keyword>
<keyword id="KW-0694">RNA-binding</keyword>
<keyword id="KW-0698">rRNA processing</keyword>
<keyword id="KW-0949">S-adenosyl-L-methionine</keyword>
<keyword id="KW-0808">Transferase</keyword>
<sequence length="253" mass="28370">MKHIPRKRFGQHFLSDSGIIDAIVRAIAPEPGQPMVEIGPGLAALTQPLVERLGRLTVVELDRDLAARLRQHGQLDVIESDVLKVDFAQVAQALNAPKIRVVGNLPYNISTPILFHLLAHVRVIADQHFMLQKEVIDRMVAAPATSAYGRLSVMLQWRYAMENVLFVPPESFDPPPRVDSAVVRMVPHEAPEALSMPVLEELVQVAFSQRRKLLRHTLGRWLEARQFAGTFDTQRRAEEVPVSEYVALAQKCS</sequence>